<dbReference type="EC" id="2.4.1.242" evidence="2"/>
<dbReference type="EMBL" id="AC006424">
    <property type="protein sequence ID" value="AAF31273.1"/>
    <property type="molecule type" value="Genomic_DNA"/>
</dbReference>
<dbReference type="EMBL" id="CP002684">
    <property type="protein sequence ID" value="AEE31537.1"/>
    <property type="molecule type" value="Genomic_DNA"/>
</dbReference>
<dbReference type="EMBL" id="AY094405">
    <property type="protein sequence ID" value="AAM19783.1"/>
    <property type="molecule type" value="mRNA"/>
</dbReference>
<dbReference type="EMBL" id="AY123983">
    <property type="protein sequence ID" value="AAM74496.1"/>
    <property type="molecule type" value="mRNA"/>
</dbReference>
<dbReference type="EMBL" id="AY149948">
    <property type="protein sequence ID" value="AAN31102.1"/>
    <property type="molecule type" value="mRNA"/>
</dbReference>
<dbReference type="EMBL" id="AY088544">
    <property type="protein sequence ID" value="AAM66076.1"/>
    <property type="molecule type" value="mRNA"/>
</dbReference>
<dbReference type="PIR" id="F86453">
    <property type="entry name" value="F86453"/>
</dbReference>
<dbReference type="RefSeq" id="NP_174566.1">
    <property type="nucleotide sequence ID" value="NM_103023.4"/>
</dbReference>
<dbReference type="SMR" id="Q9MAQ0"/>
<dbReference type="BioGRID" id="25418">
    <property type="interactions" value="2"/>
</dbReference>
<dbReference type="DIP" id="DIP-53368N"/>
<dbReference type="FunCoup" id="Q9MAQ0">
    <property type="interactions" value="213"/>
</dbReference>
<dbReference type="IntAct" id="Q9MAQ0">
    <property type="interactions" value="2"/>
</dbReference>
<dbReference type="STRING" id="3702.Q9MAQ0"/>
<dbReference type="CAZy" id="GT5">
    <property type="family name" value="Glycosyltransferase Family 5"/>
</dbReference>
<dbReference type="GlyGen" id="Q9MAQ0">
    <property type="glycosylation" value="1 site"/>
</dbReference>
<dbReference type="PaxDb" id="3702-AT1G32900.1"/>
<dbReference type="ProteomicsDB" id="228326"/>
<dbReference type="EnsemblPlants" id="AT1G32900.1">
    <property type="protein sequence ID" value="AT1G32900.1"/>
    <property type="gene ID" value="AT1G32900"/>
</dbReference>
<dbReference type="GeneID" id="840184"/>
<dbReference type="Gramene" id="AT1G32900.1">
    <property type="protein sequence ID" value="AT1G32900.1"/>
    <property type="gene ID" value="AT1G32900"/>
</dbReference>
<dbReference type="KEGG" id="ath:AT1G32900"/>
<dbReference type="Araport" id="AT1G32900"/>
<dbReference type="TAIR" id="AT1G32900">
    <property type="gene designation" value="GBSS1"/>
</dbReference>
<dbReference type="eggNOG" id="ENOG502QQX3">
    <property type="taxonomic scope" value="Eukaryota"/>
</dbReference>
<dbReference type="HOGENOM" id="CLU_009583_18_2_1"/>
<dbReference type="InParanoid" id="Q9MAQ0"/>
<dbReference type="OMA" id="AHDWPAG"/>
<dbReference type="OrthoDB" id="512920at2759"/>
<dbReference type="PhylomeDB" id="Q9MAQ0"/>
<dbReference type="BioCyc" id="ARA:AT1G32900-MONOMER"/>
<dbReference type="BRENDA" id="2.4.1.242">
    <property type="organism ID" value="399"/>
</dbReference>
<dbReference type="UniPathway" id="UPA00152"/>
<dbReference type="PRO" id="PR:Q9MAQ0"/>
<dbReference type="Proteomes" id="UP000006548">
    <property type="component" value="Chromosome 1"/>
</dbReference>
<dbReference type="ExpressionAtlas" id="Q9MAQ0">
    <property type="expression patterns" value="baseline and differential"/>
</dbReference>
<dbReference type="GO" id="GO:0009507">
    <property type="term" value="C:chloroplast"/>
    <property type="evidence" value="ECO:0007005"/>
    <property type="project" value="TAIR"/>
</dbReference>
<dbReference type="GO" id="GO:0009569">
    <property type="term" value="C:chloroplast starch grain"/>
    <property type="evidence" value="ECO:0000314"/>
    <property type="project" value="TAIR"/>
</dbReference>
<dbReference type="GO" id="GO:0004373">
    <property type="term" value="F:alpha-1,4-glucan glucosyltransferase (UDP-glucose donor) activity"/>
    <property type="evidence" value="ECO:0007669"/>
    <property type="project" value="InterPro"/>
</dbReference>
<dbReference type="GO" id="GO:0019252">
    <property type="term" value="P:starch biosynthetic process"/>
    <property type="evidence" value="ECO:0007669"/>
    <property type="project" value="UniProtKB-UniPathway"/>
</dbReference>
<dbReference type="CDD" id="cd03791">
    <property type="entry name" value="GT5_Glycogen_synthase_DULL1-like"/>
    <property type="match status" value="1"/>
</dbReference>
<dbReference type="FunFam" id="3.40.50.2000:FF:000073">
    <property type="entry name" value="Starch synthase, chloroplastic/amyloplastic"/>
    <property type="match status" value="1"/>
</dbReference>
<dbReference type="FunFam" id="3.40.50.2000:FF:000090">
    <property type="entry name" value="Starch synthase, chloroplastic/amyloplastic"/>
    <property type="match status" value="1"/>
</dbReference>
<dbReference type="Gene3D" id="3.40.50.2000">
    <property type="entry name" value="Glycogen Phosphorylase B"/>
    <property type="match status" value="2"/>
</dbReference>
<dbReference type="HAMAP" id="MF_00484">
    <property type="entry name" value="Glycogen_synth"/>
    <property type="match status" value="1"/>
</dbReference>
<dbReference type="InterPro" id="IPR001296">
    <property type="entry name" value="Glyco_trans_1"/>
</dbReference>
<dbReference type="InterPro" id="IPR011835">
    <property type="entry name" value="GS/SS"/>
</dbReference>
<dbReference type="InterPro" id="IPR013534">
    <property type="entry name" value="Starch_synth_cat_dom"/>
</dbReference>
<dbReference type="NCBIfam" id="TIGR02095">
    <property type="entry name" value="glgA"/>
    <property type="match status" value="1"/>
</dbReference>
<dbReference type="PANTHER" id="PTHR45825">
    <property type="entry name" value="GRANULE-BOUND STARCH SYNTHASE 1, CHLOROPLASTIC/AMYLOPLASTIC"/>
    <property type="match status" value="1"/>
</dbReference>
<dbReference type="PANTHER" id="PTHR45825:SF3">
    <property type="entry name" value="GRANULE-BOUND STARCH SYNTHASE 1, CHLOROPLASTIC_AMYLOPLASTIC"/>
    <property type="match status" value="1"/>
</dbReference>
<dbReference type="Pfam" id="PF08323">
    <property type="entry name" value="Glyco_transf_5"/>
    <property type="match status" value="1"/>
</dbReference>
<dbReference type="Pfam" id="PF00534">
    <property type="entry name" value="Glycos_transf_1"/>
    <property type="match status" value="1"/>
</dbReference>
<dbReference type="SUPFAM" id="SSF53756">
    <property type="entry name" value="UDP-Glycosyltransferase/glycogen phosphorylase"/>
    <property type="match status" value="1"/>
</dbReference>
<proteinExistence type="evidence at protein level"/>
<evidence type="ECO:0000250" key="1">
    <source>
        <dbReference type="UniProtKB" id="P0A6U8"/>
    </source>
</evidence>
<evidence type="ECO:0000250" key="2">
    <source>
        <dbReference type="UniProtKB" id="P84633"/>
    </source>
</evidence>
<evidence type="ECO:0000255" key="3"/>
<evidence type="ECO:0000269" key="4">
    <source>
    </source>
</evidence>
<evidence type="ECO:0000269" key="5">
    <source>
    </source>
</evidence>
<evidence type="ECO:0000269" key="6">
    <source>
    </source>
</evidence>
<evidence type="ECO:0000269" key="7">
    <source>
    </source>
</evidence>
<evidence type="ECO:0000303" key="8">
    <source>
    </source>
</evidence>
<evidence type="ECO:0000303" key="9">
    <source>
    </source>
</evidence>
<evidence type="ECO:0000303" key="10">
    <source>
    </source>
</evidence>
<evidence type="ECO:0000303" key="11">
    <source>
    </source>
</evidence>
<evidence type="ECO:0000305" key="12"/>
<evidence type="ECO:0000312" key="13">
    <source>
        <dbReference type="Araport" id="AT1G32900"/>
    </source>
</evidence>
<evidence type="ECO:0000312" key="14">
    <source>
        <dbReference type="EMBL" id="AAF31273.1"/>
    </source>
</evidence>
<organism>
    <name type="scientific">Arabidopsis thaliana</name>
    <name type="common">Mouse-ear cress</name>
    <dbReference type="NCBI Taxonomy" id="3702"/>
    <lineage>
        <taxon>Eukaryota</taxon>
        <taxon>Viridiplantae</taxon>
        <taxon>Streptophyta</taxon>
        <taxon>Embryophyta</taxon>
        <taxon>Tracheophyta</taxon>
        <taxon>Spermatophyta</taxon>
        <taxon>Magnoliopsida</taxon>
        <taxon>eudicotyledons</taxon>
        <taxon>Gunneridae</taxon>
        <taxon>Pentapetalae</taxon>
        <taxon>rosids</taxon>
        <taxon>malvids</taxon>
        <taxon>Brassicales</taxon>
        <taxon>Brassicaceae</taxon>
        <taxon>Camelineae</taxon>
        <taxon>Arabidopsis</taxon>
    </lineage>
</organism>
<keyword id="KW-0150">Chloroplast</keyword>
<keyword id="KW-0175">Coiled coil</keyword>
<keyword id="KW-0328">Glycosyltransferase</keyword>
<keyword id="KW-0934">Plastid</keyword>
<keyword id="KW-1185">Reference proteome</keyword>
<keyword id="KW-0750">Starch biosynthesis</keyword>
<keyword id="KW-0808">Transferase</keyword>
<keyword id="KW-0809">Transit peptide</keyword>
<protein>
    <recommendedName>
        <fullName evidence="9">Granule-bound starch synthase 1, chloroplastic/amyloplastic</fullName>
        <shortName evidence="9">AtGBS1</shortName>
        <shortName evidence="8">AtGBSS1</shortName>
        <ecNumber evidence="2">2.4.1.242</ecNumber>
    </recommendedName>
    <alternativeName>
        <fullName>Granule-bound starch synthase I</fullName>
        <shortName>GBSS-I</shortName>
    </alternativeName>
</protein>
<gene>
    <name evidence="8" type="primary">GBSS1</name>
    <name evidence="9" type="synonym">GBS1</name>
    <name evidence="10 11" type="synonym">GBSS</name>
    <name type="synonym">WAXY</name>
    <name evidence="11 13" type="ordered locus">At1g32900</name>
    <name evidence="14" type="ORF">F9L11.8</name>
</gene>
<accession>Q9MAQ0</accession>
<comment type="function">
    <text evidence="4 5 6">Required for the synthesis of amylose (PubMed:25710501). Destroyed as it is released from the starch granules during the night (PubMed:15347792). The circadian expression is controlled by CCA1 and LHY transcription factors (PubMed:12777053).</text>
</comment>
<comment type="catalytic activity">
    <reaction evidence="2">
        <text>an NDP-alpha-D-glucose + [(1-&gt;4)-alpha-D-glucosyl](n) = [(1-&gt;4)-alpha-D-glucosyl](n+1) + a ribonucleoside 5'-diphosphate + H(+)</text>
        <dbReference type="Rhea" id="RHEA:15873"/>
        <dbReference type="Rhea" id="RHEA-COMP:9584"/>
        <dbReference type="Rhea" id="RHEA-COMP:9587"/>
        <dbReference type="ChEBI" id="CHEBI:15378"/>
        <dbReference type="ChEBI" id="CHEBI:15444"/>
        <dbReference type="ChEBI" id="CHEBI:57930"/>
        <dbReference type="ChEBI" id="CHEBI:76533"/>
        <dbReference type="EC" id="2.4.1.242"/>
    </reaction>
</comment>
<comment type="pathway">
    <text>Glycan biosynthesis; starch biosynthesis.</text>
</comment>
<comment type="subunit">
    <text evidence="6">Interacts with PTST. This interaction is critical for the localization to starch granules.</text>
</comment>
<comment type="interaction">
    <interactant intactId="EBI-2355339">
        <id>Q9MAQ0</id>
    </interactant>
    <interactant intactId="EBI-4430187">
        <id>Q94AX2</id>
        <label>PTST</label>
    </interactant>
    <organismsDiffer>false</organismsDiffer>
    <experiments>2</experiments>
</comment>
<comment type="subcellular location">
    <subcellularLocation>
        <location evidence="5 6">Plastid</location>
        <location evidence="5 6">Chloroplast</location>
    </subcellularLocation>
    <text evidence="5 6">Exclusively bound to starch granules and found in the soluble fraction only if PTST is absent.</text>
</comment>
<comment type="tissue specificity">
    <text evidence="4">Expressed in roots, inflorescences, flowers, fruits and at much higher levels in leaves.</text>
</comment>
<comment type="induction">
    <text evidence="4 5">Circadian-regulation. Strong up-regulation at the end of the night and the beginning of the light period.</text>
</comment>
<comment type="disruption phenotype">
    <text evidence="6">Production of amylose-free starch.</text>
</comment>
<comment type="similarity">
    <text evidence="12">Belongs to the glycosyltransferase 1 family. Bacterial/plant glycogen synthase subfamily.</text>
</comment>
<sequence length="610" mass="66879">MATVTASSNFVSRTSLFNNHGASSCSDVAQITLKGQSLTHCGLRSFNMVDNLQRRSQAKPVSAKSSKRSSKVKTAGKIVCEKGMSVIFIGAEVGPWSKTGGLGDVLGGLPPALAARGHRVMTICPRYDQYKDAWDTCVVVQIKVGDKVENVRFFHCYKRGVDRVFVDHPIFLAKVVGKTGSKIYGPITGVDYNDNQLRFSLLCQAALEAPQVLNLNSSKYFSGPYGEDVVFVANDWHTALLPCYLKSMYQSRGVYMNAKVVFCIHNIAYQGRFAFDDYSLLNLPISFKSSFDFMDGYEKPVKGRKINWMKAAILEAHRVLTVSPYYAQELISGVDRGVELHKYLRMKTVSGIINGMDVQEWNPSTDKYIDIKYDITTVTDAKPLIKEALQAAVGLPVDRDVPVIGFIGRLEEQKGSDILVEAISKFMGLNVQMVILGTGKKKMEAQILELEEKFPGKAVGVAKFNVPLAHMITAGADFIIVPSRFEPCGLIQLHAMRYGTVPIVASTGGLVDTVKDGYTGFHIGRFNVKCEVVDPDDVIATAKAVTRAVAVYGTSAMQEMVKNCMDQDFSWKGPARLWEKVLLSLNVAGSEAGTEGEEIAPLAKENVATP</sequence>
<name>SSG1_ARATH</name>
<reference key="1">
    <citation type="journal article" date="2000" name="Nature">
        <title>Sequence and analysis of chromosome 1 of the plant Arabidopsis thaliana.</title>
        <authorList>
            <person name="Theologis A."/>
            <person name="Ecker J.R."/>
            <person name="Palm C.J."/>
            <person name="Federspiel N.A."/>
            <person name="Kaul S."/>
            <person name="White O."/>
            <person name="Alonso J."/>
            <person name="Altafi H."/>
            <person name="Araujo R."/>
            <person name="Bowman C.L."/>
            <person name="Brooks S.Y."/>
            <person name="Buehler E."/>
            <person name="Chan A."/>
            <person name="Chao Q."/>
            <person name="Chen H."/>
            <person name="Cheuk R.F."/>
            <person name="Chin C.W."/>
            <person name="Chung M.K."/>
            <person name="Conn L."/>
            <person name="Conway A.B."/>
            <person name="Conway A.R."/>
            <person name="Creasy T.H."/>
            <person name="Dewar K."/>
            <person name="Dunn P."/>
            <person name="Etgu P."/>
            <person name="Feldblyum T.V."/>
            <person name="Feng J.-D."/>
            <person name="Fong B."/>
            <person name="Fujii C.Y."/>
            <person name="Gill J.E."/>
            <person name="Goldsmith A.D."/>
            <person name="Haas B."/>
            <person name="Hansen N.F."/>
            <person name="Hughes B."/>
            <person name="Huizar L."/>
            <person name="Hunter J.L."/>
            <person name="Jenkins J."/>
            <person name="Johnson-Hopson C."/>
            <person name="Khan S."/>
            <person name="Khaykin E."/>
            <person name="Kim C.J."/>
            <person name="Koo H.L."/>
            <person name="Kremenetskaia I."/>
            <person name="Kurtz D.B."/>
            <person name="Kwan A."/>
            <person name="Lam B."/>
            <person name="Langin-Hooper S."/>
            <person name="Lee A."/>
            <person name="Lee J.M."/>
            <person name="Lenz C.A."/>
            <person name="Li J.H."/>
            <person name="Li Y.-P."/>
            <person name="Lin X."/>
            <person name="Liu S.X."/>
            <person name="Liu Z.A."/>
            <person name="Luros J.S."/>
            <person name="Maiti R."/>
            <person name="Marziali A."/>
            <person name="Militscher J."/>
            <person name="Miranda M."/>
            <person name="Nguyen M."/>
            <person name="Nierman W.C."/>
            <person name="Osborne B.I."/>
            <person name="Pai G."/>
            <person name="Peterson J."/>
            <person name="Pham P.K."/>
            <person name="Rizzo M."/>
            <person name="Rooney T."/>
            <person name="Rowley D."/>
            <person name="Sakano H."/>
            <person name="Salzberg S.L."/>
            <person name="Schwartz J.R."/>
            <person name="Shinn P."/>
            <person name="Southwick A.M."/>
            <person name="Sun H."/>
            <person name="Tallon L.J."/>
            <person name="Tambunga G."/>
            <person name="Toriumi M.J."/>
            <person name="Town C.D."/>
            <person name="Utterback T."/>
            <person name="Van Aken S."/>
            <person name="Vaysberg M."/>
            <person name="Vysotskaia V.S."/>
            <person name="Walker M."/>
            <person name="Wu D."/>
            <person name="Yu G."/>
            <person name="Fraser C.M."/>
            <person name="Venter J.C."/>
            <person name="Davis R.W."/>
        </authorList>
    </citation>
    <scope>NUCLEOTIDE SEQUENCE [LARGE SCALE GENOMIC DNA]</scope>
    <source>
        <strain>cv. Columbia</strain>
    </source>
</reference>
<reference key="2">
    <citation type="journal article" date="2017" name="Plant J.">
        <title>Araport11: a complete reannotation of the Arabidopsis thaliana reference genome.</title>
        <authorList>
            <person name="Cheng C.Y."/>
            <person name="Krishnakumar V."/>
            <person name="Chan A.P."/>
            <person name="Thibaud-Nissen F."/>
            <person name="Schobel S."/>
            <person name="Town C.D."/>
        </authorList>
    </citation>
    <scope>GENOME REANNOTATION</scope>
    <source>
        <strain>cv. Columbia</strain>
    </source>
</reference>
<reference key="3">
    <citation type="journal article" date="2003" name="Science">
        <title>Empirical analysis of transcriptional activity in the Arabidopsis genome.</title>
        <authorList>
            <person name="Yamada K."/>
            <person name="Lim J."/>
            <person name="Dale J.M."/>
            <person name="Chen H."/>
            <person name="Shinn P."/>
            <person name="Palm C.J."/>
            <person name="Southwick A.M."/>
            <person name="Wu H.C."/>
            <person name="Kim C.J."/>
            <person name="Nguyen M."/>
            <person name="Pham P.K."/>
            <person name="Cheuk R.F."/>
            <person name="Karlin-Newmann G."/>
            <person name="Liu S.X."/>
            <person name="Lam B."/>
            <person name="Sakano H."/>
            <person name="Wu T."/>
            <person name="Yu G."/>
            <person name="Miranda M."/>
            <person name="Quach H.L."/>
            <person name="Tripp M."/>
            <person name="Chang C.H."/>
            <person name="Lee J.M."/>
            <person name="Toriumi M.J."/>
            <person name="Chan M.M."/>
            <person name="Tang C.C."/>
            <person name="Onodera C.S."/>
            <person name="Deng J.M."/>
            <person name="Akiyama K."/>
            <person name="Ansari Y."/>
            <person name="Arakawa T."/>
            <person name="Banh J."/>
            <person name="Banno F."/>
            <person name="Bowser L."/>
            <person name="Brooks S.Y."/>
            <person name="Carninci P."/>
            <person name="Chao Q."/>
            <person name="Choy N."/>
            <person name="Enju A."/>
            <person name="Goldsmith A.D."/>
            <person name="Gurjal M."/>
            <person name="Hansen N.F."/>
            <person name="Hayashizaki Y."/>
            <person name="Johnson-Hopson C."/>
            <person name="Hsuan V.W."/>
            <person name="Iida K."/>
            <person name="Karnes M."/>
            <person name="Khan S."/>
            <person name="Koesema E."/>
            <person name="Ishida J."/>
            <person name="Jiang P.X."/>
            <person name="Jones T."/>
            <person name="Kawai J."/>
            <person name="Kamiya A."/>
            <person name="Meyers C."/>
            <person name="Nakajima M."/>
            <person name="Narusaka M."/>
            <person name="Seki M."/>
            <person name="Sakurai T."/>
            <person name="Satou M."/>
            <person name="Tamse R."/>
            <person name="Vaysberg M."/>
            <person name="Wallender E.K."/>
            <person name="Wong C."/>
            <person name="Yamamura Y."/>
            <person name="Yuan S."/>
            <person name="Shinozaki K."/>
            <person name="Davis R.W."/>
            <person name="Theologis A."/>
            <person name="Ecker J.R."/>
        </authorList>
    </citation>
    <scope>NUCLEOTIDE SEQUENCE [LARGE SCALE MRNA]</scope>
    <source>
        <strain>cv. Columbia</strain>
    </source>
</reference>
<reference key="4">
    <citation type="submission" date="2002-03" db="EMBL/GenBank/DDBJ databases">
        <title>Full-length cDNA from Arabidopsis thaliana.</title>
        <authorList>
            <person name="Brover V.V."/>
            <person name="Troukhan M.E."/>
            <person name="Alexandrov N.A."/>
            <person name="Lu Y.-P."/>
            <person name="Flavell R.B."/>
            <person name="Feldmann K.A."/>
        </authorList>
    </citation>
    <scope>NUCLEOTIDE SEQUENCE [LARGE SCALE MRNA]</scope>
</reference>
<reference key="5">
    <citation type="journal article" date="2003" name="Plant Mol. Biol.">
        <title>Oscillation of mRNA level and activity of granule-bound starch synthase I in Arabidopsis leaves during the day/night cycle.</title>
        <authorList>
            <person name="Tenorio G."/>
            <person name="Orea A."/>
            <person name="Romero J.M."/>
            <person name="Merida A."/>
        </authorList>
    </citation>
    <scope>FUNCTION</scope>
    <scope>INDUCTION BY LIGHT</scope>
    <scope>TISSUE SPECIFICITY</scope>
</reference>
<reference key="6">
    <citation type="journal article" date="2004" name="Plant Physiol.">
        <title>Diurnal changes in the transcriptome encoding enzymes of starch metabolism provide evidence for both transcriptional and posttranscriptional regulation of starch metabolism in Arabidopsis leaves.</title>
        <authorList>
            <person name="Smith S.M."/>
            <person name="Fulton D.C."/>
            <person name="Chia T."/>
            <person name="Thorneycroft D."/>
            <person name="Chapple A."/>
            <person name="Dunstan H."/>
            <person name="Hylton C."/>
            <person name="Zeeman S.C."/>
            <person name="Smith A.M."/>
        </authorList>
    </citation>
    <scope>FUNCTION</scope>
    <scope>INDUCTION BY LIGHT</scope>
    <scope>SUBCELLULAR LOCATION</scope>
</reference>
<reference key="7">
    <citation type="journal article" date="2015" name="PLoS Biol.">
        <title>PROTEIN TARGETING TO STARCH is required for localising GRANULE-BOUND STARCH SYNTHASE to starch granules and for normal amylose synthesis in Arabidopsis.</title>
        <authorList>
            <person name="Seung D."/>
            <person name="Soyk S."/>
            <person name="Coiro M."/>
            <person name="Maier B.A."/>
            <person name="Eicke S."/>
            <person name="Zeeman S.C."/>
        </authorList>
    </citation>
    <scope>FUNCTION</scope>
    <scope>DISRUPTION PHENOTYPE</scope>
    <scope>SUBCELLULAR LOCATION</scope>
    <scope>3D-STRUCTURE MODELING</scope>
    <scope>MUTAGENESIS OF LYS-441; GLU-449; GLU-452 AND GLU-486</scope>
    <scope>INTERACTION WITH PTST</scope>
    <source>
        <strain>cv. Columbia</strain>
    </source>
</reference>
<reference key="8">
    <citation type="journal article" date="2018" name="Plant Cell">
        <title>Two Plastidial Coiled-Coil Proteins Are Essential for Normal Starch Granule Initiation in Arabidopsis.</title>
        <authorList>
            <person name="Seung D."/>
            <person name="Schreier T.B."/>
            <person name="Buergy L."/>
            <person name="Eicke S."/>
            <person name="Zeeman S.C."/>
        </authorList>
    </citation>
    <scope>MUTAGENESIS OF GLU-486</scope>
</reference>
<feature type="transit peptide" description="Chloroplast" evidence="3">
    <location>
        <begin position="1"/>
        <end position="79"/>
    </location>
</feature>
<feature type="chain" id="PRO_0000011125" description="Granule-bound starch synthase 1, chloroplastic/amyloplastic">
    <location>
        <begin position="80"/>
        <end position="610"/>
    </location>
</feature>
<feature type="coiled-coil region" evidence="12">
    <location>
        <begin position="438"/>
        <end position="454"/>
    </location>
</feature>
<feature type="binding site" evidence="1">
    <location>
        <position position="98"/>
    </location>
    <ligand>
        <name>ADP-alpha-D-glucose</name>
        <dbReference type="ChEBI" id="CHEBI:57498"/>
    </ligand>
</feature>
<feature type="mutagenesis site" description="No effect on activity, but reduced interaction with PTST." evidence="6">
    <original>K</original>
    <variation>E</variation>
    <location>
        <position position="441"/>
    </location>
</feature>
<feature type="mutagenesis site" description="No effect on activity, but reduced interaction with PTST." evidence="6">
    <original>E</original>
    <variation>K</variation>
    <location>
        <position position="449"/>
    </location>
</feature>
<feature type="mutagenesis site" description="No effect on activity, but loss of interaction with PTST." evidence="6">
    <original>E</original>
    <variation>K</variation>
    <location>
        <position position="452"/>
    </location>
</feature>
<feature type="mutagenesis site" description="Loss of activity." evidence="6 7">
    <original>E</original>
    <variation>A</variation>
    <location>
        <position position="486"/>
    </location>
</feature>